<comment type="function">
    <text evidence="1">Removes maltotriose and maltotetraose chains that are attached by 1,6-alpha-linkage to the limit dextrin main chain, generating a debranched limit dextrin.</text>
</comment>
<comment type="catalytic activity">
    <reaction evidence="1">
        <text>Hydrolysis of (1-&gt;6)-alpha-D-glucosidic linkages to branches with degrees of polymerization of three or four glucose residues in limit dextrin.</text>
        <dbReference type="EC" id="3.2.1.196"/>
    </reaction>
</comment>
<comment type="pathway">
    <text evidence="1">Glycan degradation; glycogen degradation.</text>
</comment>
<comment type="similarity">
    <text evidence="1">Belongs to the glycosyl hydrolase 13 family.</text>
</comment>
<proteinExistence type="inferred from homology"/>
<feature type="chain" id="PRO_0000054303" description="Glycogen debranching enzyme">
    <location>
        <begin position="1"/>
        <end position="657"/>
    </location>
</feature>
<feature type="region of interest" description="Disordered" evidence="2">
    <location>
        <begin position="460"/>
        <end position="479"/>
    </location>
</feature>
<feature type="active site" description="Nucleophile" evidence="1">
    <location>
        <position position="336"/>
    </location>
</feature>
<feature type="active site" description="Proton donor" evidence="1">
    <location>
        <position position="371"/>
    </location>
</feature>
<feature type="site" description="Transition state stabilizer" evidence="1">
    <location>
        <position position="443"/>
    </location>
</feature>
<gene>
    <name evidence="1" type="primary">glgX</name>
    <name type="ordered locus">SF3454</name>
    <name type="ordered locus">S4309</name>
</gene>
<dbReference type="EC" id="3.2.1.196" evidence="1"/>
<dbReference type="EMBL" id="AE005674">
    <property type="protein sequence ID" value="AAN44914.1"/>
    <property type="molecule type" value="Genomic_DNA"/>
</dbReference>
<dbReference type="EMBL" id="AE014073">
    <property type="protein sequence ID" value="AAP19267.1"/>
    <property type="molecule type" value="Genomic_DNA"/>
</dbReference>
<dbReference type="RefSeq" id="NP_709207.1">
    <property type="nucleotide sequence ID" value="NC_004337.2"/>
</dbReference>
<dbReference type="RefSeq" id="WP_000192556.1">
    <property type="nucleotide sequence ID" value="NZ_WPGW01000010.1"/>
</dbReference>
<dbReference type="SMR" id="Q83J89"/>
<dbReference type="STRING" id="198214.SF3454"/>
<dbReference type="PaxDb" id="198214-SF3454"/>
<dbReference type="GeneID" id="1026472"/>
<dbReference type="KEGG" id="sfl:SF3454"/>
<dbReference type="KEGG" id="sfx:S4309"/>
<dbReference type="PATRIC" id="fig|198214.7.peg.4074"/>
<dbReference type="HOGENOM" id="CLU_011725_1_1_6"/>
<dbReference type="UniPathway" id="UPA00165"/>
<dbReference type="Proteomes" id="UP000001006">
    <property type="component" value="Chromosome"/>
</dbReference>
<dbReference type="Proteomes" id="UP000002673">
    <property type="component" value="Chromosome"/>
</dbReference>
<dbReference type="GO" id="GO:0004133">
    <property type="term" value="F:glycogen debranching enzyme activity"/>
    <property type="evidence" value="ECO:0007669"/>
    <property type="project" value="UniProtKB-UniRule"/>
</dbReference>
<dbReference type="GO" id="GO:0004553">
    <property type="term" value="F:hydrolase activity, hydrolyzing O-glycosyl compounds"/>
    <property type="evidence" value="ECO:0007669"/>
    <property type="project" value="InterPro"/>
</dbReference>
<dbReference type="GO" id="GO:0005980">
    <property type="term" value="P:glycogen catabolic process"/>
    <property type="evidence" value="ECO:0007669"/>
    <property type="project" value="UniProtKB-UniRule"/>
</dbReference>
<dbReference type="CDD" id="cd11326">
    <property type="entry name" value="AmyAc_Glg_debranch"/>
    <property type="match status" value="1"/>
</dbReference>
<dbReference type="CDD" id="cd02856">
    <property type="entry name" value="E_set_GDE_Isoamylase_N"/>
    <property type="match status" value="1"/>
</dbReference>
<dbReference type="FunFam" id="2.60.40.10:FF:000468">
    <property type="entry name" value="Glycogen debranching enzyme"/>
    <property type="match status" value="1"/>
</dbReference>
<dbReference type="FunFam" id="3.20.20.80:FF:000031">
    <property type="entry name" value="Glycogen debranching enzyme"/>
    <property type="match status" value="1"/>
</dbReference>
<dbReference type="Gene3D" id="3.20.20.80">
    <property type="entry name" value="Glycosidases"/>
    <property type="match status" value="1"/>
</dbReference>
<dbReference type="Gene3D" id="2.60.40.1180">
    <property type="entry name" value="Golgi alpha-mannosidase II"/>
    <property type="match status" value="1"/>
</dbReference>
<dbReference type="Gene3D" id="2.60.40.10">
    <property type="entry name" value="Immunoglobulins"/>
    <property type="match status" value="1"/>
</dbReference>
<dbReference type="HAMAP" id="MF_01248">
    <property type="entry name" value="GlgX"/>
    <property type="match status" value="1"/>
</dbReference>
<dbReference type="InterPro" id="IPR040784">
    <property type="entry name" value="GlgX_C"/>
</dbReference>
<dbReference type="InterPro" id="IPR044505">
    <property type="entry name" value="GlgX_Isoamylase_N_E_set"/>
</dbReference>
<dbReference type="InterPro" id="IPR006047">
    <property type="entry name" value="Glyco_hydro_13_cat_dom"/>
</dbReference>
<dbReference type="InterPro" id="IPR004193">
    <property type="entry name" value="Glyco_hydro_13_N"/>
</dbReference>
<dbReference type="InterPro" id="IPR013780">
    <property type="entry name" value="Glyco_hydro_b"/>
</dbReference>
<dbReference type="InterPro" id="IPR022844">
    <property type="entry name" value="Glycogen_debranch_bac"/>
</dbReference>
<dbReference type="InterPro" id="IPR011837">
    <property type="entry name" value="Glycogen_debranch_GlgX"/>
</dbReference>
<dbReference type="InterPro" id="IPR017853">
    <property type="entry name" value="Glycoside_hydrolase_SF"/>
</dbReference>
<dbReference type="InterPro" id="IPR013783">
    <property type="entry name" value="Ig-like_fold"/>
</dbReference>
<dbReference type="InterPro" id="IPR014756">
    <property type="entry name" value="Ig_E-set"/>
</dbReference>
<dbReference type="NCBIfam" id="TIGR02100">
    <property type="entry name" value="glgX_debranch"/>
    <property type="match status" value="1"/>
</dbReference>
<dbReference type="NCBIfam" id="NF002983">
    <property type="entry name" value="PRK03705.1"/>
    <property type="match status" value="1"/>
</dbReference>
<dbReference type="PANTHER" id="PTHR43002">
    <property type="entry name" value="GLYCOGEN DEBRANCHING ENZYME"/>
    <property type="match status" value="1"/>
</dbReference>
<dbReference type="Pfam" id="PF00128">
    <property type="entry name" value="Alpha-amylase"/>
    <property type="match status" value="1"/>
</dbReference>
<dbReference type="Pfam" id="PF02922">
    <property type="entry name" value="CBM_48"/>
    <property type="match status" value="1"/>
</dbReference>
<dbReference type="Pfam" id="PF18390">
    <property type="entry name" value="GlgX_C"/>
    <property type="match status" value="1"/>
</dbReference>
<dbReference type="SMART" id="SM00642">
    <property type="entry name" value="Aamy"/>
    <property type="match status" value="1"/>
</dbReference>
<dbReference type="SUPFAM" id="SSF51445">
    <property type="entry name" value="(Trans)glycosidases"/>
    <property type="match status" value="1"/>
</dbReference>
<dbReference type="SUPFAM" id="SSF81296">
    <property type="entry name" value="E set domains"/>
    <property type="match status" value="1"/>
</dbReference>
<evidence type="ECO:0000255" key="1">
    <source>
        <dbReference type="HAMAP-Rule" id="MF_01248"/>
    </source>
</evidence>
<evidence type="ECO:0000256" key="2">
    <source>
        <dbReference type="SAM" id="MobiDB-lite"/>
    </source>
</evidence>
<organism>
    <name type="scientific">Shigella flexneri</name>
    <dbReference type="NCBI Taxonomy" id="623"/>
    <lineage>
        <taxon>Bacteria</taxon>
        <taxon>Pseudomonadati</taxon>
        <taxon>Pseudomonadota</taxon>
        <taxon>Gammaproteobacteria</taxon>
        <taxon>Enterobacterales</taxon>
        <taxon>Enterobacteriaceae</taxon>
        <taxon>Shigella</taxon>
    </lineage>
</organism>
<protein>
    <recommendedName>
        <fullName evidence="1">Glycogen debranching enzyme</fullName>
        <ecNumber evidence="1">3.2.1.196</ecNumber>
    </recommendedName>
    <alternativeName>
        <fullName evidence="1">Limit dextrin alpha-1,6-maltotetraose-hydrolase</fullName>
    </alternativeName>
</protein>
<sequence length="657" mass="73639">MTQLAIGKPAPLGAHYDGQGVNFTLFSAHAERVELCVFDANGQEHRYDLPGNSGDIWHGYLPDARPGLRYGYRVHGPWQPAEGHRFNPAKLLIDPCARQIDGEFKDNPLLHAGHNEPDYRDNAAIAPKCVVVVDHYDWEDDAPPRTPWGSTIIYEAHVKGLTYLHPEIPVEIRGTYKALGHPVMINYLKQLGITALELLPVAQFASEPRLQRMGLSNYWGYNPVAMFALHPAYACSPETALDEFRDAIKALHKAGIEVILDIVLNHSAELDLDGPLFSLRGIDNRSYYWIREDGDYHNWTGCGNTLNLSHPAVVDYASACLRYWVETCHVDGFRFDLAAVMGRTPEFRQDAPLFTAIQNCPVLSQVKLIAEPWDIAPSGYQVGNFPPLFAEWNDHFRDAARRFWLHYDLPLGAFAGRFAASSDVFKRNGRLPSAAINLVTAHDGFTLRDCVCFNHKHNEANGEENRDGTNNNYSNNHGKEGLGGTLDLVERRRDSIHALLTTLLLSQGTPMLLAGDEHGHSQHGNNNAYCQDNQLNWLDWSQASSGLTAFTAALIHLRKRIPALVENRWWEEGDGNVRWLNRYAQPLSTDEWQNGPKQLQILLSDRFLIAINATLEVTEIVLPAGEWHAIPPFAGEDNPVITVVWQGPAHGLCVFQR</sequence>
<keyword id="KW-0119">Carbohydrate metabolism</keyword>
<keyword id="KW-0321">Glycogen metabolism</keyword>
<keyword id="KW-0326">Glycosidase</keyword>
<keyword id="KW-0378">Hydrolase</keyword>
<keyword id="KW-1185">Reference proteome</keyword>
<name>GLGX_SHIFL</name>
<accession>Q83J89</accession>
<reference key="1">
    <citation type="journal article" date="2002" name="Nucleic Acids Res.">
        <title>Genome sequence of Shigella flexneri 2a: insights into pathogenicity through comparison with genomes of Escherichia coli K12 and O157.</title>
        <authorList>
            <person name="Jin Q."/>
            <person name="Yuan Z."/>
            <person name="Xu J."/>
            <person name="Wang Y."/>
            <person name="Shen Y."/>
            <person name="Lu W."/>
            <person name="Wang J."/>
            <person name="Liu H."/>
            <person name="Yang J."/>
            <person name="Yang F."/>
            <person name="Zhang X."/>
            <person name="Zhang J."/>
            <person name="Yang G."/>
            <person name="Wu H."/>
            <person name="Qu D."/>
            <person name="Dong J."/>
            <person name="Sun L."/>
            <person name="Xue Y."/>
            <person name="Zhao A."/>
            <person name="Gao Y."/>
            <person name="Zhu J."/>
            <person name="Kan B."/>
            <person name="Ding K."/>
            <person name="Chen S."/>
            <person name="Cheng H."/>
            <person name="Yao Z."/>
            <person name="He B."/>
            <person name="Chen R."/>
            <person name="Ma D."/>
            <person name="Qiang B."/>
            <person name="Wen Y."/>
            <person name="Hou Y."/>
            <person name="Yu J."/>
        </authorList>
    </citation>
    <scope>NUCLEOTIDE SEQUENCE [LARGE SCALE GENOMIC DNA]</scope>
    <source>
        <strain>301 / Serotype 2a</strain>
    </source>
</reference>
<reference key="2">
    <citation type="journal article" date="2003" name="Infect. Immun.">
        <title>Complete genome sequence and comparative genomics of Shigella flexneri serotype 2a strain 2457T.</title>
        <authorList>
            <person name="Wei J."/>
            <person name="Goldberg M.B."/>
            <person name="Burland V."/>
            <person name="Venkatesan M.M."/>
            <person name="Deng W."/>
            <person name="Fournier G."/>
            <person name="Mayhew G.F."/>
            <person name="Plunkett G. III"/>
            <person name="Rose D.J."/>
            <person name="Darling A."/>
            <person name="Mau B."/>
            <person name="Perna N.T."/>
            <person name="Payne S.M."/>
            <person name="Runyen-Janecky L.J."/>
            <person name="Zhou S."/>
            <person name="Schwartz D.C."/>
            <person name="Blattner F.R."/>
        </authorList>
    </citation>
    <scope>NUCLEOTIDE SEQUENCE [LARGE SCALE GENOMIC DNA]</scope>
    <source>
        <strain>ATCC 700930 / 2457T / Serotype 2a</strain>
    </source>
</reference>